<evidence type="ECO:0000255" key="1">
    <source>
        <dbReference type="HAMAP-Rule" id="MF_00131"/>
    </source>
</evidence>
<keyword id="KW-0028">Amino-acid biosynthesis</keyword>
<keyword id="KW-0057">Aromatic amino acid biosynthesis</keyword>
<keyword id="KW-0456">Lyase</keyword>
<keyword id="KW-1185">Reference proteome</keyword>
<keyword id="KW-0822">Tryptophan biosynthesis</keyword>
<dbReference type="EC" id="4.2.1.20" evidence="1"/>
<dbReference type="EMBL" id="CP000304">
    <property type="protein sequence ID" value="ABP80542.1"/>
    <property type="molecule type" value="Genomic_DNA"/>
</dbReference>
<dbReference type="RefSeq" id="WP_011913998.1">
    <property type="nucleotide sequence ID" value="NC_009434.1"/>
</dbReference>
<dbReference type="SMR" id="A4VNJ1"/>
<dbReference type="KEGG" id="psa:PST_2896"/>
<dbReference type="eggNOG" id="COG0159">
    <property type="taxonomic scope" value="Bacteria"/>
</dbReference>
<dbReference type="HOGENOM" id="CLU_016734_0_0_6"/>
<dbReference type="UniPathway" id="UPA00035">
    <property type="reaction ID" value="UER00044"/>
</dbReference>
<dbReference type="Proteomes" id="UP000000233">
    <property type="component" value="Chromosome"/>
</dbReference>
<dbReference type="GO" id="GO:0005829">
    <property type="term" value="C:cytosol"/>
    <property type="evidence" value="ECO:0007669"/>
    <property type="project" value="TreeGrafter"/>
</dbReference>
<dbReference type="GO" id="GO:0004834">
    <property type="term" value="F:tryptophan synthase activity"/>
    <property type="evidence" value="ECO:0007669"/>
    <property type="project" value="UniProtKB-UniRule"/>
</dbReference>
<dbReference type="CDD" id="cd04724">
    <property type="entry name" value="Tryptophan_synthase_alpha"/>
    <property type="match status" value="1"/>
</dbReference>
<dbReference type="FunFam" id="3.20.20.70:FF:000037">
    <property type="entry name" value="Tryptophan synthase alpha chain"/>
    <property type="match status" value="1"/>
</dbReference>
<dbReference type="Gene3D" id="3.20.20.70">
    <property type="entry name" value="Aldolase class I"/>
    <property type="match status" value="1"/>
</dbReference>
<dbReference type="HAMAP" id="MF_00131">
    <property type="entry name" value="Trp_synth_alpha"/>
    <property type="match status" value="1"/>
</dbReference>
<dbReference type="InterPro" id="IPR013785">
    <property type="entry name" value="Aldolase_TIM"/>
</dbReference>
<dbReference type="InterPro" id="IPR011060">
    <property type="entry name" value="RibuloseP-bd_barrel"/>
</dbReference>
<dbReference type="InterPro" id="IPR018204">
    <property type="entry name" value="Trp_synthase_alpha_AS"/>
</dbReference>
<dbReference type="InterPro" id="IPR002028">
    <property type="entry name" value="Trp_synthase_suA"/>
</dbReference>
<dbReference type="NCBIfam" id="TIGR00262">
    <property type="entry name" value="trpA"/>
    <property type="match status" value="1"/>
</dbReference>
<dbReference type="PANTHER" id="PTHR43406:SF1">
    <property type="entry name" value="TRYPTOPHAN SYNTHASE ALPHA CHAIN, CHLOROPLASTIC"/>
    <property type="match status" value="1"/>
</dbReference>
<dbReference type="PANTHER" id="PTHR43406">
    <property type="entry name" value="TRYPTOPHAN SYNTHASE, ALPHA CHAIN"/>
    <property type="match status" value="1"/>
</dbReference>
<dbReference type="Pfam" id="PF00290">
    <property type="entry name" value="Trp_syntA"/>
    <property type="match status" value="1"/>
</dbReference>
<dbReference type="SUPFAM" id="SSF51366">
    <property type="entry name" value="Ribulose-phoshate binding barrel"/>
    <property type="match status" value="1"/>
</dbReference>
<dbReference type="PROSITE" id="PS00167">
    <property type="entry name" value="TRP_SYNTHASE_ALPHA"/>
    <property type="match status" value="1"/>
</dbReference>
<protein>
    <recommendedName>
        <fullName evidence="1">Tryptophan synthase alpha chain</fullName>
        <ecNumber evidence="1">4.2.1.20</ecNumber>
    </recommendedName>
</protein>
<name>TRPA_STUS1</name>
<proteinExistence type="inferred from homology"/>
<feature type="chain" id="PRO_1000018260" description="Tryptophan synthase alpha chain">
    <location>
        <begin position="1"/>
        <end position="269"/>
    </location>
</feature>
<feature type="active site" description="Proton acceptor" evidence="1">
    <location>
        <position position="49"/>
    </location>
</feature>
<feature type="active site" description="Proton acceptor" evidence="1">
    <location>
        <position position="60"/>
    </location>
</feature>
<accession>A4VNJ1</accession>
<gene>
    <name evidence="1" type="primary">trpA</name>
    <name type="ordered locus">PST_2896</name>
</gene>
<sequence length="269" mass="28690">MSRLLTRFDELKQQNRAALVTFITAGDPDYATSLQILKGLPAAGADVIELGMPFTDPMADGPAIQLANIRALAAKQDLAKTLQMVREFRQDDQTTPIVLMGYFNPIHKMGVERFIAEAVEAGVDGLIVVDLPPEHNEDLCDPAQAAGIDFIRLTTPTTDDKRLPVVLNGSSGFVYYVSVAGVTGAGSATLEHVEEAVARLKRHTELPVCVGFGIRTPEQAAAIARLTEGVVVGSALIDQIANAKSNAQAVEGVLELCRQISTGVRSARA</sequence>
<comment type="function">
    <text evidence="1">The alpha subunit is responsible for the aldol cleavage of indoleglycerol phosphate to indole and glyceraldehyde 3-phosphate.</text>
</comment>
<comment type="catalytic activity">
    <reaction evidence="1">
        <text>(1S,2R)-1-C-(indol-3-yl)glycerol 3-phosphate + L-serine = D-glyceraldehyde 3-phosphate + L-tryptophan + H2O</text>
        <dbReference type="Rhea" id="RHEA:10532"/>
        <dbReference type="ChEBI" id="CHEBI:15377"/>
        <dbReference type="ChEBI" id="CHEBI:33384"/>
        <dbReference type="ChEBI" id="CHEBI:57912"/>
        <dbReference type="ChEBI" id="CHEBI:58866"/>
        <dbReference type="ChEBI" id="CHEBI:59776"/>
        <dbReference type="EC" id="4.2.1.20"/>
    </reaction>
</comment>
<comment type="pathway">
    <text evidence="1">Amino-acid biosynthesis; L-tryptophan biosynthesis; L-tryptophan from chorismate: step 5/5.</text>
</comment>
<comment type="subunit">
    <text evidence="1">Tetramer of two alpha and two beta chains.</text>
</comment>
<comment type="similarity">
    <text evidence="1">Belongs to the TrpA family.</text>
</comment>
<reference key="1">
    <citation type="journal article" date="2008" name="Proc. Natl. Acad. Sci. U.S.A.">
        <title>Nitrogen fixation island and rhizosphere competence traits in the genome of root-associated Pseudomonas stutzeri A1501.</title>
        <authorList>
            <person name="Yan Y."/>
            <person name="Yang J."/>
            <person name="Dou Y."/>
            <person name="Chen M."/>
            <person name="Ping S."/>
            <person name="Peng J."/>
            <person name="Lu W."/>
            <person name="Zhang W."/>
            <person name="Yao Z."/>
            <person name="Li H."/>
            <person name="Liu W."/>
            <person name="He S."/>
            <person name="Geng L."/>
            <person name="Zhang X."/>
            <person name="Yang F."/>
            <person name="Yu H."/>
            <person name="Zhan Y."/>
            <person name="Li D."/>
            <person name="Lin Z."/>
            <person name="Wang Y."/>
            <person name="Elmerich C."/>
            <person name="Lin M."/>
            <person name="Jin Q."/>
        </authorList>
    </citation>
    <scope>NUCLEOTIDE SEQUENCE [LARGE SCALE GENOMIC DNA]</scope>
    <source>
        <strain>A1501</strain>
    </source>
</reference>
<organism>
    <name type="scientific">Stutzerimonas stutzeri (strain A1501)</name>
    <name type="common">Pseudomonas stutzeri</name>
    <dbReference type="NCBI Taxonomy" id="379731"/>
    <lineage>
        <taxon>Bacteria</taxon>
        <taxon>Pseudomonadati</taxon>
        <taxon>Pseudomonadota</taxon>
        <taxon>Gammaproteobacteria</taxon>
        <taxon>Pseudomonadales</taxon>
        <taxon>Pseudomonadaceae</taxon>
        <taxon>Stutzerimonas</taxon>
    </lineage>
</organism>